<feature type="chain" id="PRO_0000175309" description="DNA-directed RNA polymerase subunit alpha">
    <location>
        <begin position="1"/>
        <end position="326"/>
    </location>
</feature>
<feature type="region of interest" description="Alpha N-terminal domain (alpha-NTD)" evidence="1">
    <location>
        <begin position="1"/>
        <end position="230"/>
    </location>
</feature>
<feature type="region of interest" description="Alpha C-terminal domain (alpha-CTD)" evidence="1">
    <location>
        <begin position="249"/>
        <end position="326"/>
    </location>
</feature>
<gene>
    <name evidence="1" type="primary">rpoA</name>
    <name type="ordered locus">FN1283</name>
</gene>
<sequence>MLKIEKQAKAIKITEVKESNYKGQFIVEPLYRGYGNTLGNALRRVLLSSIPGAAIKGMRIEGVLSEFTVMDGVKEAVTEIILNVKEIVVKAESSGERRMSLSIKGPKVVKAADIVADIGLEIVNPEQVICTVTTDRTLDIEFIVDTGEGFVVSEEIDKKDWPVDYIAVDAIYTPIRKVSYEIQDTMFGRMTDFDKLTLNVETDGSIEIRDALSYAVELLKLHLDPFLEIGNKMENLRDDIEEMIEEPMDIQVIDDKSHDMKIEELDLTVRSFNCLKKAGIEEVSQLASLSLNELLKIKNLGKKSLDEILEKMKDLGYDLEKNGSPE</sequence>
<reference key="1">
    <citation type="journal article" date="2002" name="J. Bacteriol.">
        <title>Genome sequence and analysis of the oral bacterium Fusobacterium nucleatum strain ATCC 25586.</title>
        <authorList>
            <person name="Kapatral V."/>
            <person name="Anderson I."/>
            <person name="Ivanova N."/>
            <person name="Reznik G."/>
            <person name="Los T."/>
            <person name="Lykidis A."/>
            <person name="Bhattacharyya A."/>
            <person name="Bartman A."/>
            <person name="Gardner W."/>
            <person name="Grechkin G."/>
            <person name="Zhu L."/>
            <person name="Vasieva O."/>
            <person name="Chu L."/>
            <person name="Kogan Y."/>
            <person name="Chaga O."/>
            <person name="Goltsman E."/>
            <person name="Bernal A."/>
            <person name="Larsen N."/>
            <person name="D'Souza M."/>
            <person name="Walunas T."/>
            <person name="Pusch G."/>
            <person name="Haselkorn R."/>
            <person name="Fonstein M."/>
            <person name="Kyrpides N.C."/>
            <person name="Overbeek R."/>
        </authorList>
    </citation>
    <scope>NUCLEOTIDE SEQUENCE [LARGE SCALE GENOMIC DNA]</scope>
    <source>
        <strain>ATCC 25586 / DSM 15643 / BCRC 10681 / CIP 101130 / JCM 8532 / KCTC 2640 / LMG 13131 / VPI 4355</strain>
    </source>
</reference>
<organism>
    <name type="scientific">Fusobacterium nucleatum subsp. nucleatum (strain ATCC 25586 / DSM 15643 / BCRC 10681 / CIP 101130 / JCM 8532 / KCTC 2640 / LMG 13131 / VPI 4355)</name>
    <dbReference type="NCBI Taxonomy" id="190304"/>
    <lineage>
        <taxon>Bacteria</taxon>
        <taxon>Fusobacteriati</taxon>
        <taxon>Fusobacteriota</taxon>
        <taxon>Fusobacteriia</taxon>
        <taxon>Fusobacteriales</taxon>
        <taxon>Fusobacteriaceae</taxon>
        <taxon>Fusobacterium</taxon>
    </lineage>
</organism>
<name>RPOA_FUSNN</name>
<dbReference type="EC" id="2.7.7.6" evidence="1"/>
<dbReference type="EMBL" id="AE009951">
    <property type="protein sequence ID" value="AAL95479.1"/>
    <property type="status" value="ALT_INIT"/>
    <property type="molecule type" value="Genomic_DNA"/>
</dbReference>
<dbReference type="RefSeq" id="NP_604180.1">
    <property type="nucleotide sequence ID" value="NC_003454.1"/>
</dbReference>
<dbReference type="RefSeq" id="WP_023041516.1">
    <property type="nucleotide sequence ID" value="NZ_OZ209243.1"/>
</dbReference>
<dbReference type="SMR" id="Q8RE44"/>
<dbReference type="FunCoup" id="Q8RE44">
    <property type="interactions" value="335"/>
</dbReference>
<dbReference type="STRING" id="190304.FN1283"/>
<dbReference type="PaxDb" id="190304-FN1283"/>
<dbReference type="EnsemblBacteria" id="AAL95479">
    <property type="protein sequence ID" value="AAL95479"/>
    <property type="gene ID" value="FN1283"/>
</dbReference>
<dbReference type="KEGG" id="fnu:FN1283"/>
<dbReference type="PATRIC" id="fig|190304.8.peg.1848"/>
<dbReference type="eggNOG" id="COG0202">
    <property type="taxonomic scope" value="Bacteria"/>
</dbReference>
<dbReference type="HOGENOM" id="CLU_053084_0_1_0"/>
<dbReference type="InParanoid" id="Q8RE44"/>
<dbReference type="Proteomes" id="UP000002521">
    <property type="component" value="Chromosome"/>
</dbReference>
<dbReference type="GO" id="GO:0005737">
    <property type="term" value="C:cytoplasm"/>
    <property type="evidence" value="ECO:0000318"/>
    <property type="project" value="GO_Central"/>
</dbReference>
<dbReference type="GO" id="GO:0000428">
    <property type="term" value="C:DNA-directed RNA polymerase complex"/>
    <property type="evidence" value="ECO:0007669"/>
    <property type="project" value="UniProtKB-KW"/>
</dbReference>
<dbReference type="GO" id="GO:0003677">
    <property type="term" value="F:DNA binding"/>
    <property type="evidence" value="ECO:0007669"/>
    <property type="project" value="UniProtKB-UniRule"/>
</dbReference>
<dbReference type="GO" id="GO:0003899">
    <property type="term" value="F:DNA-directed RNA polymerase activity"/>
    <property type="evidence" value="ECO:0007669"/>
    <property type="project" value="UniProtKB-UniRule"/>
</dbReference>
<dbReference type="GO" id="GO:0046983">
    <property type="term" value="F:protein dimerization activity"/>
    <property type="evidence" value="ECO:0007669"/>
    <property type="project" value="InterPro"/>
</dbReference>
<dbReference type="GO" id="GO:0006351">
    <property type="term" value="P:DNA-templated transcription"/>
    <property type="evidence" value="ECO:0007669"/>
    <property type="project" value="UniProtKB-UniRule"/>
</dbReference>
<dbReference type="CDD" id="cd06928">
    <property type="entry name" value="RNAP_alpha_NTD"/>
    <property type="match status" value="1"/>
</dbReference>
<dbReference type="FunFam" id="2.170.120.12:FF:000001">
    <property type="entry name" value="DNA-directed RNA polymerase subunit alpha"/>
    <property type="match status" value="1"/>
</dbReference>
<dbReference type="Gene3D" id="1.10.150.20">
    <property type="entry name" value="5' to 3' exonuclease, C-terminal subdomain"/>
    <property type="match status" value="1"/>
</dbReference>
<dbReference type="Gene3D" id="2.170.120.12">
    <property type="entry name" value="DNA-directed RNA polymerase, insert domain"/>
    <property type="match status" value="1"/>
</dbReference>
<dbReference type="Gene3D" id="3.30.1360.10">
    <property type="entry name" value="RNA polymerase, RBP11-like subunit"/>
    <property type="match status" value="1"/>
</dbReference>
<dbReference type="HAMAP" id="MF_00059">
    <property type="entry name" value="RNApol_bact_RpoA"/>
    <property type="match status" value="1"/>
</dbReference>
<dbReference type="InterPro" id="IPR011262">
    <property type="entry name" value="DNA-dir_RNA_pol_insert"/>
</dbReference>
<dbReference type="InterPro" id="IPR011263">
    <property type="entry name" value="DNA-dir_RNA_pol_RpoA/D/Rpb3"/>
</dbReference>
<dbReference type="InterPro" id="IPR011773">
    <property type="entry name" value="DNA-dir_RpoA"/>
</dbReference>
<dbReference type="InterPro" id="IPR036603">
    <property type="entry name" value="RBP11-like"/>
</dbReference>
<dbReference type="InterPro" id="IPR011260">
    <property type="entry name" value="RNAP_asu_C"/>
</dbReference>
<dbReference type="InterPro" id="IPR036643">
    <property type="entry name" value="RNApol_insert_sf"/>
</dbReference>
<dbReference type="NCBIfam" id="NF003513">
    <property type="entry name" value="PRK05182.1-2"/>
    <property type="match status" value="1"/>
</dbReference>
<dbReference type="NCBIfam" id="NF003519">
    <property type="entry name" value="PRK05182.2-5"/>
    <property type="match status" value="1"/>
</dbReference>
<dbReference type="NCBIfam" id="TIGR02027">
    <property type="entry name" value="rpoA"/>
    <property type="match status" value="1"/>
</dbReference>
<dbReference type="Pfam" id="PF01000">
    <property type="entry name" value="RNA_pol_A_bac"/>
    <property type="match status" value="1"/>
</dbReference>
<dbReference type="Pfam" id="PF03118">
    <property type="entry name" value="RNA_pol_A_CTD"/>
    <property type="match status" value="1"/>
</dbReference>
<dbReference type="Pfam" id="PF01193">
    <property type="entry name" value="RNA_pol_L"/>
    <property type="match status" value="1"/>
</dbReference>
<dbReference type="SMART" id="SM00662">
    <property type="entry name" value="RPOLD"/>
    <property type="match status" value="1"/>
</dbReference>
<dbReference type="SUPFAM" id="SSF47789">
    <property type="entry name" value="C-terminal domain of RNA polymerase alpha subunit"/>
    <property type="match status" value="1"/>
</dbReference>
<dbReference type="SUPFAM" id="SSF56553">
    <property type="entry name" value="Insert subdomain of RNA polymerase alpha subunit"/>
    <property type="match status" value="1"/>
</dbReference>
<dbReference type="SUPFAM" id="SSF55257">
    <property type="entry name" value="RBP11-like subunits of RNA polymerase"/>
    <property type="match status" value="1"/>
</dbReference>
<accession>Q8RE44</accession>
<comment type="function">
    <text evidence="1">DNA-dependent RNA polymerase catalyzes the transcription of DNA into RNA using the four ribonucleoside triphosphates as substrates.</text>
</comment>
<comment type="catalytic activity">
    <reaction evidence="1">
        <text>RNA(n) + a ribonucleoside 5'-triphosphate = RNA(n+1) + diphosphate</text>
        <dbReference type="Rhea" id="RHEA:21248"/>
        <dbReference type="Rhea" id="RHEA-COMP:14527"/>
        <dbReference type="Rhea" id="RHEA-COMP:17342"/>
        <dbReference type="ChEBI" id="CHEBI:33019"/>
        <dbReference type="ChEBI" id="CHEBI:61557"/>
        <dbReference type="ChEBI" id="CHEBI:140395"/>
        <dbReference type="EC" id="2.7.7.6"/>
    </reaction>
</comment>
<comment type="subunit">
    <text evidence="1">Homodimer. The RNAP catalytic core consists of 2 alpha, 1 beta, 1 beta' and 1 omega subunit. When a sigma factor is associated with the core the holoenzyme is formed, which can initiate transcription.</text>
</comment>
<comment type="domain">
    <text evidence="1">The N-terminal domain is essential for RNAP assembly and basal transcription, whereas the C-terminal domain is involved in interaction with transcriptional regulators and with upstream promoter elements.</text>
</comment>
<comment type="similarity">
    <text evidence="1">Belongs to the RNA polymerase alpha chain family.</text>
</comment>
<comment type="sequence caution" evidence="2">
    <conflict type="erroneous initiation">
        <sequence resource="EMBL-CDS" id="AAL95479"/>
    </conflict>
</comment>
<keyword id="KW-0240">DNA-directed RNA polymerase</keyword>
<keyword id="KW-0548">Nucleotidyltransferase</keyword>
<keyword id="KW-1185">Reference proteome</keyword>
<keyword id="KW-0804">Transcription</keyword>
<keyword id="KW-0808">Transferase</keyword>
<proteinExistence type="inferred from homology"/>
<protein>
    <recommendedName>
        <fullName evidence="1">DNA-directed RNA polymerase subunit alpha</fullName>
        <shortName evidence="1">RNAP subunit alpha</shortName>
        <ecNumber evidence="1">2.7.7.6</ecNumber>
    </recommendedName>
    <alternativeName>
        <fullName evidence="1">RNA polymerase subunit alpha</fullName>
    </alternativeName>
    <alternativeName>
        <fullName evidence="1">Transcriptase subunit alpha</fullName>
    </alternativeName>
</protein>
<evidence type="ECO:0000255" key="1">
    <source>
        <dbReference type="HAMAP-Rule" id="MF_00059"/>
    </source>
</evidence>
<evidence type="ECO:0000305" key="2"/>